<name>CH60_YEREN</name>
<evidence type="ECO:0000255" key="1">
    <source>
        <dbReference type="HAMAP-Rule" id="MF_00600"/>
    </source>
</evidence>
<evidence type="ECO:0000305" key="2"/>
<proteinExistence type="inferred from homology"/>
<sequence>MAAKDVKFGNDARIKMLRGVNILADAVKVTLGPKGRNVVLDKSFGSPTITKDGVSVAREIELEDKFENMGAQMVKEVASKANDAAGDGTTTATVLAQSIITEGLKAVAAGMNPMDLKRGIDKAVIAAVEELKKLSVPCSDSKAIAQVGTISANSDSTVGELIAQAMEKVGKEGVITVEEGSGLQDELDVVEGMQFDRGYLSPYFINKPETGSIELESPFILLADKKISNIREMLPVLEAVAKAGKPLLIIAEDVEGEALATLVVNTMRGIVKVAAVKAPGFGDRRKAMLQDIATLTAGTVISEEIGLELEKTTLEDLGQAKRVVINKDTTIIIDGVGDEAAIQGRVAQIRQQIEEATSDYDKEKLQERVAKLAGGVAVIKVGAATEVEMKEKKARVEDALHATRAAVEEGVVAGGGVALIRAASAITAAGLKGDNEDQNVGIKVALRAMESPLRQIVVNAGEEASVIANNVKAGSGSYGYNAYSEEYGDMIAMGILDPTKVTRSALQYAASIAGLMITTECMITDLPRDDKGADMGAGGMGGMGGMGGMM</sequence>
<comment type="function">
    <text evidence="1">Together with its co-chaperonin GroES, plays an essential role in assisting protein folding. The GroEL-GroES system forms a nano-cage that allows encapsulation of the non-native substrate proteins and provides a physical environment optimized to promote and accelerate protein folding.</text>
</comment>
<comment type="catalytic activity">
    <reaction evidence="1">
        <text>ATP + H2O + a folded polypeptide = ADP + phosphate + an unfolded polypeptide.</text>
        <dbReference type="EC" id="5.6.1.7"/>
    </reaction>
</comment>
<comment type="subunit">
    <text evidence="1">Forms a cylinder of 14 subunits composed of two heptameric rings stacked back-to-back. Interacts with the co-chaperonin GroES.</text>
</comment>
<comment type="subcellular location">
    <subcellularLocation>
        <location evidence="1">Cytoplasm</location>
    </subcellularLocation>
</comment>
<comment type="similarity">
    <text evidence="1">Belongs to the chaperonin (HSP60) family.</text>
</comment>
<organism>
    <name type="scientific">Yersinia enterocolitica</name>
    <dbReference type="NCBI Taxonomy" id="630"/>
    <lineage>
        <taxon>Bacteria</taxon>
        <taxon>Pseudomonadati</taxon>
        <taxon>Pseudomonadota</taxon>
        <taxon>Gammaproteobacteria</taxon>
        <taxon>Enterobacterales</taxon>
        <taxon>Yersiniaceae</taxon>
        <taxon>Yersinia</taxon>
    </lineage>
</organism>
<dbReference type="EC" id="5.6.1.7" evidence="1"/>
<dbReference type="EMBL" id="X68526">
    <property type="protein sequence ID" value="CAA48539.1"/>
    <property type="molecule type" value="Genomic_DNA"/>
</dbReference>
<dbReference type="EMBL" id="X82212">
    <property type="protein sequence ID" value="CAA57694.1"/>
    <property type="molecule type" value="Genomic_DNA"/>
</dbReference>
<dbReference type="EMBL" id="D14078">
    <property type="protein sequence ID" value="BAA03164.1"/>
    <property type="molecule type" value="Genomic_DNA"/>
</dbReference>
<dbReference type="PIR" id="S26423">
    <property type="entry name" value="S26423"/>
</dbReference>
<dbReference type="PIR" id="S52901">
    <property type="entry name" value="S52901"/>
</dbReference>
<dbReference type="SMR" id="P48219"/>
<dbReference type="STRING" id="1443113.LC20_04829"/>
<dbReference type="eggNOG" id="COG0459">
    <property type="taxonomic scope" value="Bacteria"/>
</dbReference>
<dbReference type="GO" id="GO:0005737">
    <property type="term" value="C:cytoplasm"/>
    <property type="evidence" value="ECO:0007669"/>
    <property type="project" value="UniProtKB-SubCell"/>
</dbReference>
<dbReference type="GO" id="GO:0005524">
    <property type="term" value="F:ATP binding"/>
    <property type="evidence" value="ECO:0007669"/>
    <property type="project" value="UniProtKB-UniRule"/>
</dbReference>
<dbReference type="GO" id="GO:0140662">
    <property type="term" value="F:ATP-dependent protein folding chaperone"/>
    <property type="evidence" value="ECO:0007669"/>
    <property type="project" value="InterPro"/>
</dbReference>
<dbReference type="GO" id="GO:0016853">
    <property type="term" value="F:isomerase activity"/>
    <property type="evidence" value="ECO:0007669"/>
    <property type="project" value="UniProtKB-KW"/>
</dbReference>
<dbReference type="GO" id="GO:0051082">
    <property type="term" value="F:unfolded protein binding"/>
    <property type="evidence" value="ECO:0007669"/>
    <property type="project" value="UniProtKB-UniRule"/>
</dbReference>
<dbReference type="GO" id="GO:0042026">
    <property type="term" value="P:protein refolding"/>
    <property type="evidence" value="ECO:0007669"/>
    <property type="project" value="UniProtKB-UniRule"/>
</dbReference>
<dbReference type="CDD" id="cd03344">
    <property type="entry name" value="GroEL"/>
    <property type="match status" value="1"/>
</dbReference>
<dbReference type="FunFam" id="1.10.560.10:FF:000001">
    <property type="entry name" value="60 kDa chaperonin"/>
    <property type="match status" value="1"/>
</dbReference>
<dbReference type="FunFam" id="3.50.7.10:FF:000001">
    <property type="entry name" value="60 kDa chaperonin"/>
    <property type="match status" value="1"/>
</dbReference>
<dbReference type="Gene3D" id="3.50.7.10">
    <property type="entry name" value="GroEL"/>
    <property type="match status" value="1"/>
</dbReference>
<dbReference type="Gene3D" id="1.10.560.10">
    <property type="entry name" value="GroEL-like equatorial domain"/>
    <property type="match status" value="1"/>
</dbReference>
<dbReference type="Gene3D" id="3.30.260.10">
    <property type="entry name" value="TCP-1-like chaperonin intermediate domain"/>
    <property type="match status" value="1"/>
</dbReference>
<dbReference type="HAMAP" id="MF_00600">
    <property type="entry name" value="CH60"/>
    <property type="match status" value="1"/>
</dbReference>
<dbReference type="InterPro" id="IPR018370">
    <property type="entry name" value="Chaperonin_Cpn60_CS"/>
</dbReference>
<dbReference type="InterPro" id="IPR001844">
    <property type="entry name" value="Cpn60/GroEL"/>
</dbReference>
<dbReference type="InterPro" id="IPR002423">
    <property type="entry name" value="Cpn60/GroEL/TCP-1"/>
</dbReference>
<dbReference type="InterPro" id="IPR027409">
    <property type="entry name" value="GroEL-like_apical_dom_sf"/>
</dbReference>
<dbReference type="InterPro" id="IPR027413">
    <property type="entry name" value="GROEL-like_equatorial_sf"/>
</dbReference>
<dbReference type="InterPro" id="IPR027410">
    <property type="entry name" value="TCP-1-like_intermed_sf"/>
</dbReference>
<dbReference type="NCBIfam" id="TIGR02348">
    <property type="entry name" value="GroEL"/>
    <property type="match status" value="1"/>
</dbReference>
<dbReference type="NCBIfam" id="NF000592">
    <property type="entry name" value="PRK00013.1"/>
    <property type="match status" value="1"/>
</dbReference>
<dbReference type="NCBIfam" id="NF009487">
    <property type="entry name" value="PRK12849.1"/>
    <property type="match status" value="1"/>
</dbReference>
<dbReference type="NCBIfam" id="NF009488">
    <property type="entry name" value="PRK12850.1"/>
    <property type="match status" value="1"/>
</dbReference>
<dbReference type="NCBIfam" id="NF009489">
    <property type="entry name" value="PRK12851.1"/>
    <property type="match status" value="1"/>
</dbReference>
<dbReference type="PANTHER" id="PTHR45633">
    <property type="entry name" value="60 KDA HEAT SHOCK PROTEIN, MITOCHONDRIAL"/>
    <property type="match status" value="1"/>
</dbReference>
<dbReference type="Pfam" id="PF00118">
    <property type="entry name" value="Cpn60_TCP1"/>
    <property type="match status" value="1"/>
</dbReference>
<dbReference type="PRINTS" id="PR00298">
    <property type="entry name" value="CHAPERONIN60"/>
</dbReference>
<dbReference type="SUPFAM" id="SSF52029">
    <property type="entry name" value="GroEL apical domain-like"/>
    <property type="match status" value="1"/>
</dbReference>
<dbReference type="SUPFAM" id="SSF48592">
    <property type="entry name" value="GroEL equatorial domain-like"/>
    <property type="match status" value="1"/>
</dbReference>
<dbReference type="SUPFAM" id="SSF54849">
    <property type="entry name" value="GroEL-intermediate domain like"/>
    <property type="match status" value="1"/>
</dbReference>
<dbReference type="PROSITE" id="PS00296">
    <property type="entry name" value="CHAPERONINS_CPN60"/>
    <property type="match status" value="1"/>
</dbReference>
<feature type="chain" id="PRO_0000063614" description="Chaperonin GroEL">
    <location>
        <begin position="1"/>
        <end position="550"/>
    </location>
</feature>
<feature type="binding site" evidence="1">
    <location>
        <begin position="30"/>
        <end position="33"/>
    </location>
    <ligand>
        <name>ATP</name>
        <dbReference type="ChEBI" id="CHEBI:30616"/>
    </ligand>
</feature>
<feature type="binding site" evidence="1">
    <location>
        <position position="51"/>
    </location>
    <ligand>
        <name>ATP</name>
        <dbReference type="ChEBI" id="CHEBI:30616"/>
    </ligand>
</feature>
<feature type="binding site" evidence="1">
    <location>
        <begin position="87"/>
        <end position="91"/>
    </location>
    <ligand>
        <name>ATP</name>
        <dbReference type="ChEBI" id="CHEBI:30616"/>
    </ligand>
</feature>
<feature type="binding site" evidence="1">
    <location>
        <position position="415"/>
    </location>
    <ligand>
        <name>ATP</name>
        <dbReference type="ChEBI" id="CHEBI:30616"/>
    </ligand>
</feature>
<feature type="binding site" evidence="1">
    <location>
        <position position="497"/>
    </location>
    <ligand>
        <name>ATP</name>
        <dbReference type="ChEBI" id="CHEBI:30616"/>
    </ligand>
</feature>
<feature type="sequence variant" description="In strain: WA / Serotype O:8.">
    <original>A</original>
    <variation>P</variation>
    <location>
        <position position="2"/>
    </location>
</feature>
<feature type="sequence variant" description="In strain: WA / Serotype O:8.">
    <original>E</original>
    <variation>D</variation>
    <location>
        <position position="355"/>
    </location>
</feature>
<feature type="sequence conflict" description="In Ref. 3; BAA03164." evidence="2" ref="3">
    <original>ML</original>
    <variation>IV</variation>
    <location>
        <begin position="16"/>
        <end position="17"/>
    </location>
</feature>
<feature type="sequence conflict" description="In Ref. 1; CAA48539." evidence="2" ref="1">
    <original>S</original>
    <variation>Y</variation>
    <location>
        <position position="135"/>
    </location>
</feature>
<feature type="sequence conflict" description="In Ref. 1; CAA48539." evidence="2" ref="1">
    <original>S</original>
    <variation>P</variation>
    <location>
        <position position="181"/>
    </location>
</feature>
<feature type="sequence conflict" description="In Ref. 1; CAA48539." evidence="2" ref="1">
    <original>A</original>
    <variation>V</variation>
    <location>
        <position position="297"/>
    </location>
</feature>
<feature type="sequence conflict" description="In Ref. 3; BAA03164." evidence="2" ref="3">
    <original>V</original>
    <variation>L</variation>
    <location>
        <position position="346"/>
    </location>
</feature>
<feature type="sequence conflict" description="In Ref. 1; CAA48539." evidence="2" ref="1">
    <original>A</original>
    <variation>T</variation>
    <location>
        <position position="347"/>
    </location>
</feature>
<feature type="sequence conflict" description="In Ref. 3; BAA03164." evidence="2" ref="3">
    <original>H</original>
    <variation>D</variation>
    <location>
        <position position="401"/>
    </location>
</feature>
<feature type="sequence conflict" description="In Ref. 3; BAA03164." evidence="2" ref="3">
    <original>A</original>
    <variation>R</variation>
    <location>
        <position position="423"/>
    </location>
</feature>
<feature type="sequence conflict" description="In Ref. 3; BAA03164." evidence="2" ref="3">
    <original>AGSGSYGYNA</original>
    <variation>RVQVATVTS</variation>
    <location>
        <begin position="473"/>
        <end position="482"/>
    </location>
</feature>
<gene>
    <name evidence="1" type="primary">groEL</name>
    <name type="synonym">crpA</name>
    <name evidence="1" type="synonym">groL</name>
    <name type="synonym">hsp60</name>
    <name type="synonym">mopA</name>
</gene>
<accession>P48219</accession>
<reference key="1">
    <citation type="submission" date="1992-09" db="EMBL/GenBank/DDBJ databases">
        <authorList>
            <person name="Haefner C.E."/>
            <person name="Roggenkamp A."/>
        </authorList>
    </citation>
    <scope>NUCLEOTIDE SEQUENCE [GENOMIC DNA]</scope>
    <source>
        <strain>Y-108C / Serotype O:3</strain>
    </source>
</reference>
<reference key="2">
    <citation type="submission" date="1994-10" db="EMBL/GenBank/DDBJ databases">
        <authorList>
            <person name="Autenrieth I.B."/>
            <person name="Noll A."/>
        </authorList>
    </citation>
    <scope>NUCLEOTIDE SEQUENCE [GENOMIC DNA]</scope>
    <source>
        <strain>WA / Serotype O:8</strain>
    </source>
</reference>
<reference key="3">
    <citation type="journal article" date="1993" name="Res. Microbiol.">
        <title>Cloning and nucleotide sequence analysis of immunodominant heat-shock protein of Yersinia enterocolitica.</title>
        <authorList>
            <person name="Yamamoto T."/>
            <person name="Miura H."/>
            <person name="Ohsumi K."/>
            <person name="Yamaguchi H."/>
            <person name="Taguchi H."/>
            <person name="Ogata S."/>
        </authorList>
    </citation>
    <scope>NUCLEOTIDE SEQUENCE [GENOMIC DNA]</scope>
    <source>
        <strain>Serotype O:3</strain>
    </source>
</reference>
<protein>
    <recommendedName>
        <fullName evidence="1">Chaperonin GroEL</fullName>
        <ecNumber evidence="1">5.6.1.7</ecNumber>
    </recommendedName>
    <alternativeName>
        <fullName evidence="1">60 kDa chaperonin</fullName>
    </alternativeName>
    <alternativeName>
        <fullName evidence="1">Chaperonin-60</fullName>
        <shortName evidence="1">Cpn60</shortName>
    </alternativeName>
    <alternativeName>
        <fullName>Cross-reacting protein antigen</fullName>
    </alternativeName>
    <alternativeName>
        <fullName>Heat shock protein 60</fullName>
    </alternativeName>
</protein>
<keyword id="KW-0067">ATP-binding</keyword>
<keyword id="KW-0143">Chaperone</keyword>
<keyword id="KW-0963">Cytoplasm</keyword>
<keyword id="KW-0413">Isomerase</keyword>
<keyword id="KW-0547">Nucleotide-binding</keyword>
<keyword id="KW-0346">Stress response</keyword>